<dbReference type="EMBL" id="AE001273">
    <property type="protein sequence ID" value="AAC67912.1"/>
    <property type="molecule type" value="Genomic_DNA"/>
</dbReference>
<dbReference type="PIR" id="D71530">
    <property type="entry name" value="D71530"/>
</dbReference>
<dbReference type="RefSeq" id="NP_219824.1">
    <property type="nucleotide sequence ID" value="NC_000117.1"/>
</dbReference>
<dbReference type="RefSeq" id="WP_009871666.1">
    <property type="nucleotide sequence ID" value="NC_000117.1"/>
</dbReference>
<dbReference type="SMR" id="O84321"/>
<dbReference type="FunCoup" id="O84321">
    <property type="interactions" value="280"/>
</dbReference>
<dbReference type="STRING" id="272561.CT_319"/>
<dbReference type="EnsemblBacteria" id="AAC67912">
    <property type="protein sequence ID" value="AAC67912"/>
    <property type="gene ID" value="CT_319"/>
</dbReference>
<dbReference type="GeneID" id="884804"/>
<dbReference type="KEGG" id="ctr:CT_319"/>
<dbReference type="PATRIC" id="fig|272561.5.peg.341"/>
<dbReference type="HOGENOM" id="CLU_074237_2_0_0"/>
<dbReference type="InParanoid" id="O84321"/>
<dbReference type="OrthoDB" id="9802408at2"/>
<dbReference type="Proteomes" id="UP000000431">
    <property type="component" value="Chromosome"/>
</dbReference>
<dbReference type="GO" id="GO:0022625">
    <property type="term" value="C:cytosolic large ribosomal subunit"/>
    <property type="evidence" value="ECO:0000318"/>
    <property type="project" value="GO_Central"/>
</dbReference>
<dbReference type="GO" id="GO:0070180">
    <property type="term" value="F:large ribosomal subunit rRNA binding"/>
    <property type="evidence" value="ECO:0000318"/>
    <property type="project" value="GO_Central"/>
</dbReference>
<dbReference type="GO" id="GO:0003735">
    <property type="term" value="F:structural constituent of ribosome"/>
    <property type="evidence" value="ECO:0000318"/>
    <property type="project" value="GO_Central"/>
</dbReference>
<dbReference type="GO" id="GO:0006412">
    <property type="term" value="P:translation"/>
    <property type="evidence" value="ECO:0000318"/>
    <property type="project" value="GO_Central"/>
</dbReference>
<dbReference type="CDD" id="cd00349">
    <property type="entry name" value="Ribosomal_L11"/>
    <property type="match status" value="1"/>
</dbReference>
<dbReference type="FunFam" id="1.10.10.250:FF:000001">
    <property type="entry name" value="50S ribosomal protein L11"/>
    <property type="match status" value="1"/>
</dbReference>
<dbReference type="FunFam" id="3.30.1550.10:FF:000001">
    <property type="entry name" value="50S ribosomal protein L11"/>
    <property type="match status" value="1"/>
</dbReference>
<dbReference type="Gene3D" id="1.10.10.250">
    <property type="entry name" value="Ribosomal protein L11, C-terminal domain"/>
    <property type="match status" value="1"/>
</dbReference>
<dbReference type="Gene3D" id="3.30.1550.10">
    <property type="entry name" value="Ribosomal protein L11/L12, N-terminal domain"/>
    <property type="match status" value="1"/>
</dbReference>
<dbReference type="HAMAP" id="MF_00736">
    <property type="entry name" value="Ribosomal_uL11"/>
    <property type="match status" value="1"/>
</dbReference>
<dbReference type="InterPro" id="IPR000911">
    <property type="entry name" value="Ribosomal_uL11"/>
</dbReference>
<dbReference type="InterPro" id="IPR006519">
    <property type="entry name" value="Ribosomal_uL11_bac-typ"/>
</dbReference>
<dbReference type="InterPro" id="IPR020783">
    <property type="entry name" value="Ribosomal_uL11_C"/>
</dbReference>
<dbReference type="InterPro" id="IPR036769">
    <property type="entry name" value="Ribosomal_uL11_C_sf"/>
</dbReference>
<dbReference type="InterPro" id="IPR020785">
    <property type="entry name" value="Ribosomal_uL11_CS"/>
</dbReference>
<dbReference type="InterPro" id="IPR020784">
    <property type="entry name" value="Ribosomal_uL11_N"/>
</dbReference>
<dbReference type="InterPro" id="IPR036796">
    <property type="entry name" value="Ribosomal_uL11_N_sf"/>
</dbReference>
<dbReference type="NCBIfam" id="TIGR01632">
    <property type="entry name" value="L11_bact"/>
    <property type="match status" value="1"/>
</dbReference>
<dbReference type="PANTHER" id="PTHR11661">
    <property type="entry name" value="60S RIBOSOMAL PROTEIN L12"/>
    <property type="match status" value="1"/>
</dbReference>
<dbReference type="PANTHER" id="PTHR11661:SF1">
    <property type="entry name" value="LARGE RIBOSOMAL SUBUNIT PROTEIN UL11M"/>
    <property type="match status" value="1"/>
</dbReference>
<dbReference type="Pfam" id="PF00298">
    <property type="entry name" value="Ribosomal_L11"/>
    <property type="match status" value="1"/>
</dbReference>
<dbReference type="Pfam" id="PF03946">
    <property type="entry name" value="Ribosomal_L11_N"/>
    <property type="match status" value="1"/>
</dbReference>
<dbReference type="SMART" id="SM00649">
    <property type="entry name" value="RL11"/>
    <property type="match status" value="1"/>
</dbReference>
<dbReference type="SUPFAM" id="SSF54747">
    <property type="entry name" value="Ribosomal L11/L12e N-terminal domain"/>
    <property type="match status" value="1"/>
</dbReference>
<dbReference type="SUPFAM" id="SSF46906">
    <property type="entry name" value="Ribosomal protein L11, C-terminal domain"/>
    <property type="match status" value="1"/>
</dbReference>
<dbReference type="PROSITE" id="PS00359">
    <property type="entry name" value="RIBOSOMAL_L11"/>
    <property type="match status" value="1"/>
</dbReference>
<reference key="1">
    <citation type="journal article" date="1998" name="Science">
        <title>Genome sequence of an obligate intracellular pathogen of humans: Chlamydia trachomatis.</title>
        <authorList>
            <person name="Stephens R.S."/>
            <person name="Kalman S."/>
            <person name="Lammel C.J."/>
            <person name="Fan J."/>
            <person name="Marathe R."/>
            <person name="Aravind L."/>
            <person name="Mitchell W.P."/>
            <person name="Olinger L."/>
            <person name="Tatusov R.L."/>
            <person name="Zhao Q."/>
            <person name="Koonin E.V."/>
            <person name="Davis R.W."/>
        </authorList>
    </citation>
    <scope>NUCLEOTIDE SEQUENCE [LARGE SCALE GENOMIC DNA]</scope>
    <source>
        <strain>ATCC VR-885 / DSM 19411 / UW-3/Cx</strain>
    </source>
</reference>
<accession>O84321</accession>
<protein>
    <recommendedName>
        <fullName evidence="1">Large ribosomal subunit protein uL11</fullName>
    </recommendedName>
    <alternativeName>
        <fullName evidence="2">50S ribosomal protein L11</fullName>
    </alternativeName>
</protein>
<feature type="chain" id="PRO_0000104271" description="Large ribosomal subunit protein uL11">
    <location>
        <begin position="1"/>
        <end position="141"/>
    </location>
</feature>
<organism>
    <name type="scientific">Chlamydia trachomatis serovar D (strain ATCC VR-885 / DSM 19411 / UW-3/Cx)</name>
    <dbReference type="NCBI Taxonomy" id="272561"/>
    <lineage>
        <taxon>Bacteria</taxon>
        <taxon>Pseudomonadati</taxon>
        <taxon>Chlamydiota</taxon>
        <taxon>Chlamydiia</taxon>
        <taxon>Chlamydiales</taxon>
        <taxon>Chlamydiaceae</taxon>
        <taxon>Chlamydia/Chlamydophila group</taxon>
        <taxon>Chlamydia</taxon>
    </lineage>
</organism>
<gene>
    <name evidence="1" type="primary">rplK</name>
    <name type="synonym">rl11</name>
    <name type="ordered locus">CT_319</name>
</gene>
<comment type="function">
    <text evidence="1">Forms part of the ribosomal stalk which helps the ribosome interact with GTP-bound translation factors.</text>
</comment>
<comment type="subunit">
    <text evidence="1">Part of the ribosomal stalk of the 50S ribosomal subunit. Interacts with L10 and the large rRNA to form the base of the stalk. L10 forms an elongated spine to which L12 dimers bind in a sequential fashion forming a multimeric L10(L12)X complex.</text>
</comment>
<comment type="PTM">
    <text evidence="1">One or more lysine residues are methylated.</text>
</comment>
<comment type="similarity">
    <text evidence="1">Belongs to the universal ribosomal protein uL11 family.</text>
</comment>
<proteinExistence type="inferred from homology"/>
<name>RL11_CHLTR</name>
<keyword id="KW-0488">Methylation</keyword>
<keyword id="KW-1185">Reference proteome</keyword>
<keyword id="KW-0687">Ribonucleoprotein</keyword>
<keyword id="KW-0689">Ribosomal protein</keyword>
<keyword id="KW-0694">RNA-binding</keyword>
<keyword id="KW-0699">rRNA-binding</keyword>
<evidence type="ECO:0000255" key="1">
    <source>
        <dbReference type="HAMAP-Rule" id="MF_00736"/>
    </source>
</evidence>
<evidence type="ECO:0000305" key="2"/>
<sequence>MSNKKIIKIIKLQIPGGKANPAPPIGPALGAAGVNIMGFCKEFNAATQDRPGDLLPVVITVYSDKTFSFVMKQSPVSSLIKKALGLESGSKIPNRNKVGKLTRAQITVIAEQKMKDMDVVLLESAERMVEGTARSMGVDVE</sequence>